<protein>
    <recommendedName>
        <fullName>Gastrula zinc finger protein XlCGF53.1</fullName>
    </recommendedName>
</protein>
<reference key="1">
    <citation type="journal article" date="1989" name="Proc. Natl. Acad. Sci. U.S.A.">
        <title>Evolutionary conserved modules associated with zinc fingers in Xenopus laevis.</title>
        <authorList>
            <person name="Knoechel W."/>
            <person name="Poeting A."/>
            <person name="Koester M."/>
            <person name="el Baradi T."/>
            <person name="Nietfeld W."/>
            <person name="Bouwmeester T."/>
            <person name="Pieler T."/>
        </authorList>
    </citation>
    <scope>NUCLEOTIDE SEQUENCE [MRNA] OF 1-334</scope>
</reference>
<reference key="2">
    <citation type="journal article" date="1989" name="J. Mol. Biol.">
        <title>Second-order repeats in Xenopus laevis finger proteins.</title>
        <authorList>
            <person name="Nietfeld W."/>
            <person name="El-Baradi T."/>
            <person name="Mentzel H."/>
            <person name="Pieler T."/>
            <person name="Koester M."/>
            <person name="Poeting A."/>
            <person name="Knoechel W."/>
        </authorList>
    </citation>
    <scope>NUCLEOTIDE SEQUENCE [MRNA] OF 307-516</scope>
</reference>
<proteinExistence type="evidence at transcript level"/>
<sequence>MGMWEEASDTGMKGKKKKKDKNEEEEEERGKKERMVNLTLEMIYLLTGEHYIPRKKSDDGGALHAPGSVIQKENNKNDEKILELMSNIIQLLTGEVAIRTHHVSIYFSLDEWDNIKGNKVLYEEGIKEEPQQLHPLDCEYEDKRDITADLGGTLCYNNETSKIGAEGTDFCAKENLTISPVEQPPPANRIKEERASCEEGNQSDCSINPLTEQIQGTDKPTPIMGYSLNNSSANYIKEEVVQCHEGNHSDMRIITAPESILETNTSAAMIRCNLNTSLSASCEGGNQSDCRINELTEQIQGTDTPTGNIVLYICSECQKHFSTKAGLARHQKTHSVFVGEEHAYGRIHTEEKPFPCSECGKRFARRQHLTDHQSSHTGEKPYACSQCEKYFPHRSNLNRHLKLHKGEKPFPCSQCGKRFPCVSDLNIHRRVHTGERPYSCSECGKCFKHHSNLTNHQRTHTREKPFSCTECGKGFKDRSSLTVHHRTHTGEKPFSCTECGKGFKDRSSLTVHHRTH</sequence>
<dbReference type="EMBL" id="M25872">
    <property type="protein sequence ID" value="AAA50019.1"/>
    <property type="molecule type" value="mRNA"/>
</dbReference>
<dbReference type="PIR" id="G33282">
    <property type="entry name" value="G33282"/>
</dbReference>
<dbReference type="PIR" id="S06577">
    <property type="entry name" value="S06577"/>
</dbReference>
<dbReference type="SMR" id="P18728"/>
<dbReference type="Xenbase" id="XB-GENE-5773314">
    <property type="gene designation" value="XB5772961.L"/>
</dbReference>
<dbReference type="Proteomes" id="UP000186698">
    <property type="component" value="Unplaced"/>
</dbReference>
<dbReference type="GO" id="GO:0005634">
    <property type="term" value="C:nucleus"/>
    <property type="evidence" value="ECO:0007669"/>
    <property type="project" value="UniProtKB-SubCell"/>
</dbReference>
<dbReference type="GO" id="GO:0003700">
    <property type="term" value="F:DNA-binding transcription factor activity"/>
    <property type="evidence" value="ECO:0000318"/>
    <property type="project" value="GO_Central"/>
</dbReference>
<dbReference type="GO" id="GO:0000981">
    <property type="term" value="F:DNA-binding transcription factor activity, RNA polymerase II-specific"/>
    <property type="evidence" value="ECO:0007669"/>
    <property type="project" value="TreeGrafter"/>
</dbReference>
<dbReference type="GO" id="GO:0000978">
    <property type="term" value="F:RNA polymerase II cis-regulatory region sequence-specific DNA binding"/>
    <property type="evidence" value="ECO:0000318"/>
    <property type="project" value="GO_Central"/>
</dbReference>
<dbReference type="GO" id="GO:0008270">
    <property type="term" value="F:zinc ion binding"/>
    <property type="evidence" value="ECO:0007669"/>
    <property type="project" value="UniProtKB-KW"/>
</dbReference>
<dbReference type="GO" id="GO:0006357">
    <property type="term" value="P:regulation of transcription by RNA polymerase II"/>
    <property type="evidence" value="ECO:0000318"/>
    <property type="project" value="GO_Central"/>
</dbReference>
<dbReference type="FunFam" id="3.30.160.60:FF:000045">
    <property type="entry name" value="ZFP69 zinc finger protein B"/>
    <property type="match status" value="1"/>
</dbReference>
<dbReference type="FunFam" id="3.30.160.60:FF:001155">
    <property type="entry name" value="Zinc finger 30C"/>
    <property type="match status" value="3"/>
</dbReference>
<dbReference type="FunFam" id="3.30.160.60:FF:000097">
    <property type="entry name" value="Zinc finger protein"/>
    <property type="match status" value="1"/>
</dbReference>
<dbReference type="FunFam" id="3.30.160.60:FF:000759">
    <property type="entry name" value="zinc finger protein 16"/>
    <property type="match status" value="1"/>
</dbReference>
<dbReference type="FunFam" id="3.30.160.60:FF:002343">
    <property type="entry name" value="Zinc finger protein 33A"/>
    <property type="match status" value="1"/>
</dbReference>
<dbReference type="Gene3D" id="3.30.160.60">
    <property type="entry name" value="Classic Zinc Finger"/>
    <property type="match status" value="7"/>
</dbReference>
<dbReference type="InterPro" id="IPR036236">
    <property type="entry name" value="Znf_C2H2_sf"/>
</dbReference>
<dbReference type="InterPro" id="IPR013087">
    <property type="entry name" value="Znf_C2H2_type"/>
</dbReference>
<dbReference type="PANTHER" id="PTHR23226:SF407">
    <property type="entry name" value="GASTRULA ZINC FINGER PROTEIN XLCGF28.1-LIKE"/>
    <property type="match status" value="1"/>
</dbReference>
<dbReference type="PANTHER" id="PTHR23226">
    <property type="entry name" value="ZINC FINGER AND SCAN DOMAIN-CONTAINING"/>
    <property type="match status" value="1"/>
</dbReference>
<dbReference type="Pfam" id="PF00096">
    <property type="entry name" value="zf-C2H2"/>
    <property type="match status" value="7"/>
</dbReference>
<dbReference type="SMART" id="SM00355">
    <property type="entry name" value="ZnF_C2H2"/>
    <property type="match status" value="7"/>
</dbReference>
<dbReference type="SUPFAM" id="SSF57667">
    <property type="entry name" value="beta-beta-alpha zinc fingers"/>
    <property type="match status" value="4"/>
</dbReference>
<dbReference type="PROSITE" id="PS00028">
    <property type="entry name" value="ZINC_FINGER_C2H2_1"/>
    <property type="match status" value="7"/>
</dbReference>
<dbReference type="PROSITE" id="PS50157">
    <property type="entry name" value="ZINC_FINGER_C2H2_2"/>
    <property type="match status" value="7"/>
</dbReference>
<name>ZG53_XENLA</name>
<feature type="chain" id="PRO_0000047800" description="Gastrula zinc finger protein XlCGF53.1">
    <location>
        <begin position="1"/>
        <end position="516" status="greater than"/>
    </location>
</feature>
<feature type="zinc finger region" description="C2H2-type 1" evidence="1">
    <location>
        <begin position="312"/>
        <end position="334"/>
    </location>
</feature>
<feature type="zinc finger region" description="C2H2-type 2" evidence="1">
    <location>
        <begin position="354"/>
        <end position="376"/>
    </location>
</feature>
<feature type="zinc finger region" description="C2H2-type 3" evidence="1">
    <location>
        <begin position="382"/>
        <end position="404"/>
    </location>
</feature>
<feature type="zinc finger region" description="C2H2-type 4" evidence="1">
    <location>
        <begin position="410"/>
        <end position="432"/>
    </location>
</feature>
<feature type="zinc finger region" description="C2H2-type 5" evidence="1">
    <location>
        <begin position="438"/>
        <end position="460"/>
    </location>
</feature>
<feature type="zinc finger region" description="C2H2-type 6" evidence="1">
    <location>
        <begin position="466"/>
        <end position="488"/>
    </location>
</feature>
<feature type="zinc finger region" description="C2H2-type 7" evidence="1">
    <location>
        <begin position="494"/>
        <end position="516"/>
    </location>
</feature>
<feature type="region of interest" description="Disordered" evidence="2">
    <location>
        <begin position="1"/>
        <end position="33"/>
    </location>
</feature>
<feature type="region of interest" description="Disordered" evidence="2">
    <location>
        <begin position="200"/>
        <end position="220"/>
    </location>
</feature>
<feature type="compositionally biased region" description="Polar residues" evidence="2">
    <location>
        <begin position="200"/>
        <end position="218"/>
    </location>
</feature>
<feature type="non-terminal residue">
    <location>
        <position position="516"/>
    </location>
</feature>
<accession>P18728</accession>
<comment type="function">
    <text>May be involved in transcriptional regulation.</text>
</comment>
<comment type="subcellular location">
    <subcellularLocation>
        <location evidence="3">Nucleus</location>
    </subcellularLocation>
</comment>
<comment type="similarity">
    <text evidence="3">Belongs to the krueppel C2H2-type zinc-finger protein family.</text>
</comment>
<evidence type="ECO:0000255" key="1">
    <source>
        <dbReference type="PROSITE-ProRule" id="PRU00042"/>
    </source>
</evidence>
<evidence type="ECO:0000256" key="2">
    <source>
        <dbReference type="SAM" id="MobiDB-lite"/>
    </source>
</evidence>
<evidence type="ECO:0000305" key="3"/>
<organism>
    <name type="scientific">Xenopus laevis</name>
    <name type="common">African clawed frog</name>
    <dbReference type="NCBI Taxonomy" id="8355"/>
    <lineage>
        <taxon>Eukaryota</taxon>
        <taxon>Metazoa</taxon>
        <taxon>Chordata</taxon>
        <taxon>Craniata</taxon>
        <taxon>Vertebrata</taxon>
        <taxon>Euteleostomi</taxon>
        <taxon>Amphibia</taxon>
        <taxon>Batrachia</taxon>
        <taxon>Anura</taxon>
        <taxon>Pipoidea</taxon>
        <taxon>Pipidae</taxon>
        <taxon>Xenopodinae</taxon>
        <taxon>Xenopus</taxon>
        <taxon>Xenopus</taxon>
    </lineage>
</organism>
<keyword id="KW-0238">DNA-binding</keyword>
<keyword id="KW-0479">Metal-binding</keyword>
<keyword id="KW-0539">Nucleus</keyword>
<keyword id="KW-1185">Reference proteome</keyword>
<keyword id="KW-0677">Repeat</keyword>
<keyword id="KW-0804">Transcription</keyword>
<keyword id="KW-0805">Transcription regulation</keyword>
<keyword id="KW-0862">Zinc</keyword>
<keyword id="KW-0863">Zinc-finger</keyword>